<dbReference type="PIR" id="A46306">
    <property type="entry name" value="A46306"/>
</dbReference>
<dbReference type="ArachnoServer" id="AS000420">
    <property type="toxin name" value="U28-ctenitoxin-Pn1a"/>
</dbReference>
<dbReference type="GO" id="GO:0005576">
    <property type="term" value="C:extracellular region"/>
    <property type="evidence" value="ECO:0007669"/>
    <property type="project" value="UniProtKB-SubCell"/>
</dbReference>
<dbReference type="GO" id="GO:0090729">
    <property type="term" value="F:toxin activity"/>
    <property type="evidence" value="ECO:0007669"/>
    <property type="project" value="UniProtKB-KW"/>
</dbReference>
<sequence>EAFPGQST</sequence>
<feature type="chain" id="PRO_0000087645" description="U28-ctenitoxin-Pn1a">
    <location>
        <begin position="1"/>
        <end position="8" status="greater than"/>
    </location>
</feature>
<feature type="non-terminal residue">
    <location>
        <position position="8"/>
    </location>
</feature>
<proteinExistence type="evidence at protein level"/>
<accession>Q7M3P1</accession>
<organism>
    <name type="scientific">Phoneutria nigriventer</name>
    <name type="common">Brazilian armed spider</name>
    <name type="synonym">Ctenus nigriventer</name>
    <dbReference type="NCBI Taxonomy" id="6918"/>
    <lineage>
        <taxon>Eukaryota</taxon>
        <taxon>Metazoa</taxon>
        <taxon>Ecdysozoa</taxon>
        <taxon>Arthropoda</taxon>
        <taxon>Chelicerata</taxon>
        <taxon>Arachnida</taxon>
        <taxon>Araneae</taxon>
        <taxon>Araneomorphae</taxon>
        <taxon>Entelegynae</taxon>
        <taxon>Lycosoidea</taxon>
        <taxon>Ctenidae</taxon>
        <taxon>Phoneutria</taxon>
    </lineage>
</organism>
<name>TXV1_PHONI</name>
<protein>
    <recommendedName>
        <fullName>U28-ctenitoxin-Pn1a</fullName>
        <shortName>U28-CNTX-Pn1a</shortName>
    </recommendedName>
    <alternativeName>
        <fullName>Spasmogenic toxin PnV1</fullName>
    </alternativeName>
</protein>
<comment type="function">
    <text>Has a vascular smooth muscle spasmogenic activity.</text>
</comment>
<comment type="subcellular location">
    <subcellularLocation>
        <location>Secreted</location>
    </subcellularLocation>
</comment>
<comment type="tissue specificity">
    <text>Expressed by the venom gland.</text>
</comment>
<comment type="PTM">
    <text>Contains 2 disulfide bonds.</text>
</comment>
<comment type="miscellaneous">
    <text>The peptide is constituted by 125 AA.</text>
</comment>
<reference key="1">
    <citation type="journal article" date="1993" name="Toxicon">
        <title>Biochemical characterization of a vascular smooth muscle contracting polypeptide purified from Phoneutria nigriventer (armed spider) venom.</title>
        <authorList>
            <person name="Marangoni S."/>
            <person name="Borges N.C.C."/>
            <person name="Marangoni R.A."/>
            <person name="Antunes E."/>
            <person name="Vieira C.A."/>
            <person name="Novello J.C."/>
            <person name="Domont G.B."/>
            <person name="Giglio J.R."/>
            <person name="Oliveira B."/>
            <person name="de Nucci G."/>
        </authorList>
    </citation>
    <scope>PROTEIN SEQUENCE</scope>
    <source>
        <tissue>Venom</tissue>
    </source>
</reference>
<keyword id="KW-0903">Direct protein sequencing</keyword>
<keyword id="KW-1015">Disulfide bond</keyword>
<keyword id="KW-0964">Secreted</keyword>
<keyword id="KW-0800">Toxin</keyword>